<protein>
    <recommendedName>
        <fullName evidence="1">Small ribosomal subunit protein uS14c</fullName>
    </recommendedName>
    <alternativeName>
        <fullName evidence="2">30S ribosomal protein S14, chloroplastic</fullName>
    </alternativeName>
</protein>
<organism>
    <name type="scientific">Cycas taitungensis</name>
    <name type="common">Prince sago</name>
    <name type="synonym">Cycas taiwaniana</name>
    <dbReference type="NCBI Taxonomy" id="54799"/>
    <lineage>
        <taxon>Eukaryota</taxon>
        <taxon>Viridiplantae</taxon>
        <taxon>Streptophyta</taxon>
        <taxon>Embryophyta</taxon>
        <taxon>Tracheophyta</taxon>
        <taxon>Spermatophyta</taxon>
        <taxon>Cycadidae</taxon>
        <taxon>Cycadales</taxon>
        <taxon>Cycadaceae</taxon>
        <taxon>Cycas</taxon>
    </lineage>
</organism>
<proteinExistence type="inferred from homology"/>
<evidence type="ECO:0000255" key="1">
    <source>
        <dbReference type="HAMAP-Rule" id="MF_00537"/>
    </source>
</evidence>
<evidence type="ECO:0000305" key="2"/>
<geneLocation type="chloroplast"/>
<accession>A6H5H0</accession>
<comment type="function">
    <text evidence="1">Binds 16S rRNA, required for the assembly of 30S particles.</text>
</comment>
<comment type="subunit">
    <text evidence="1">Part of the 30S ribosomal subunit.</text>
</comment>
<comment type="subcellular location">
    <subcellularLocation>
        <location>Plastid</location>
        <location>Chloroplast</location>
    </subcellularLocation>
</comment>
<comment type="similarity">
    <text evidence="1">Belongs to the universal ribosomal protein uS14 family.</text>
</comment>
<name>RR14_CYCTA</name>
<reference key="1">
    <citation type="journal article" date="2007" name="Mol. Biol. Evol.">
        <title>Chloroplast genome (cpDNA) of Cycas taitungensis and 56 cp protein-coding genes of Gnetum parvifolium: insights into cpDNA evolution and phylogeny of extant seed plants.</title>
        <authorList>
            <person name="Wu C.-S."/>
            <person name="Wang Y.-N."/>
            <person name="Liu S.-M."/>
            <person name="Chaw S.-M."/>
        </authorList>
    </citation>
    <scope>NUCLEOTIDE SEQUENCE [LARGE SCALE GENOMIC DNA]</scope>
</reference>
<sequence length="100" mass="11891">MARKSLIQREKKRQVLEQKYHSIRQSLEREISEVSSLDDKWEIHRKLQSSPRNSTPTRLHRRCFLTGRSRANYRDFGLSGHVLREMTHACLLPGMKKSSW</sequence>
<gene>
    <name evidence="1" type="primary">rps14</name>
</gene>
<keyword id="KW-0150">Chloroplast</keyword>
<keyword id="KW-0934">Plastid</keyword>
<keyword id="KW-0687">Ribonucleoprotein</keyword>
<keyword id="KW-0689">Ribosomal protein</keyword>
<keyword id="KW-0694">RNA-binding</keyword>
<keyword id="KW-0699">rRNA-binding</keyword>
<dbReference type="EMBL" id="AP009339">
    <property type="protein sequence ID" value="BAF64936.1"/>
    <property type="molecule type" value="Genomic_DNA"/>
</dbReference>
<dbReference type="RefSeq" id="YP_001312195.1">
    <property type="nucleotide sequence ID" value="NC_009618.1"/>
</dbReference>
<dbReference type="SMR" id="A6H5H0"/>
<dbReference type="GeneID" id="5309500"/>
<dbReference type="GO" id="GO:0009507">
    <property type="term" value="C:chloroplast"/>
    <property type="evidence" value="ECO:0007669"/>
    <property type="project" value="UniProtKB-SubCell"/>
</dbReference>
<dbReference type="GO" id="GO:0015935">
    <property type="term" value="C:small ribosomal subunit"/>
    <property type="evidence" value="ECO:0007669"/>
    <property type="project" value="TreeGrafter"/>
</dbReference>
<dbReference type="GO" id="GO:0019843">
    <property type="term" value="F:rRNA binding"/>
    <property type="evidence" value="ECO:0007669"/>
    <property type="project" value="UniProtKB-UniRule"/>
</dbReference>
<dbReference type="GO" id="GO:0003735">
    <property type="term" value="F:structural constituent of ribosome"/>
    <property type="evidence" value="ECO:0007669"/>
    <property type="project" value="InterPro"/>
</dbReference>
<dbReference type="GO" id="GO:0006412">
    <property type="term" value="P:translation"/>
    <property type="evidence" value="ECO:0007669"/>
    <property type="project" value="UniProtKB-UniRule"/>
</dbReference>
<dbReference type="FunFam" id="1.10.287.1480:FF:000001">
    <property type="entry name" value="30S ribosomal protein S14"/>
    <property type="match status" value="1"/>
</dbReference>
<dbReference type="Gene3D" id="1.10.287.1480">
    <property type="match status" value="1"/>
</dbReference>
<dbReference type="HAMAP" id="MF_00537">
    <property type="entry name" value="Ribosomal_uS14_1"/>
    <property type="match status" value="1"/>
</dbReference>
<dbReference type="InterPro" id="IPR001209">
    <property type="entry name" value="Ribosomal_uS14"/>
</dbReference>
<dbReference type="InterPro" id="IPR023036">
    <property type="entry name" value="Ribosomal_uS14_bac/plastid"/>
</dbReference>
<dbReference type="InterPro" id="IPR018271">
    <property type="entry name" value="Ribosomal_uS14_CS"/>
</dbReference>
<dbReference type="NCBIfam" id="NF006477">
    <property type="entry name" value="PRK08881.1"/>
    <property type="match status" value="1"/>
</dbReference>
<dbReference type="PANTHER" id="PTHR19836">
    <property type="entry name" value="30S RIBOSOMAL PROTEIN S14"/>
    <property type="match status" value="1"/>
</dbReference>
<dbReference type="PANTHER" id="PTHR19836:SF19">
    <property type="entry name" value="SMALL RIBOSOMAL SUBUNIT PROTEIN US14M"/>
    <property type="match status" value="1"/>
</dbReference>
<dbReference type="Pfam" id="PF00253">
    <property type="entry name" value="Ribosomal_S14"/>
    <property type="match status" value="1"/>
</dbReference>
<dbReference type="SUPFAM" id="SSF57716">
    <property type="entry name" value="Glucocorticoid receptor-like (DNA-binding domain)"/>
    <property type="match status" value="1"/>
</dbReference>
<dbReference type="PROSITE" id="PS00527">
    <property type="entry name" value="RIBOSOMAL_S14"/>
    <property type="match status" value="1"/>
</dbReference>
<feature type="chain" id="PRO_0000354413" description="Small ribosomal subunit protein uS14c">
    <location>
        <begin position="1"/>
        <end position="100"/>
    </location>
</feature>